<accession>B4XVN1</accession>
<proteinExistence type="evidence at protein level"/>
<feature type="signal peptide" evidence="2">
    <location>
        <begin position="1"/>
        <end position="33"/>
    </location>
</feature>
<feature type="chain" id="PRO_0000424416" description="Endo-1,4-beta-xylanase A">
    <location>
        <begin position="34"/>
        <end position="464"/>
    </location>
</feature>
<feature type="domain" description="GH10" evidence="3">
    <location>
        <begin position="40"/>
        <end position="349"/>
    </location>
</feature>
<feature type="domain" description="CBM2" evidence="4">
    <location>
        <begin position="354"/>
        <end position="457"/>
    </location>
</feature>
<feature type="active site" description="Proton donor" evidence="1">
    <location>
        <position position="166"/>
    </location>
</feature>
<feature type="active site" description="Nucleophile" evidence="1">
    <location>
        <position position="271"/>
    </location>
</feature>
<feature type="helix" evidence="7">
    <location>
        <begin position="43"/>
        <end position="48"/>
    </location>
</feature>
<feature type="turn" evidence="7">
    <location>
        <begin position="49"/>
        <end position="51"/>
    </location>
</feature>
<feature type="strand" evidence="7">
    <location>
        <begin position="53"/>
        <end position="58"/>
    </location>
</feature>
<feature type="helix" evidence="7">
    <location>
        <begin position="60"/>
        <end position="62"/>
    </location>
</feature>
<feature type="helix" evidence="7">
    <location>
        <begin position="66"/>
        <end position="75"/>
    </location>
</feature>
<feature type="strand" evidence="7">
    <location>
        <begin position="77"/>
        <end position="83"/>
    </location>
</feature>
<feature type="helix" evidence="7">
    <location>
        <begin position="87"/>
        <end position="90"/>
    </location>
</feature>
<feature type="helix" evidence="7">
    <location>
        <begin position="100"/>
        <end position="111"/>
    </location>
</feature>
<feature type="strand" evidence="7">
    <location>
        <begin position="115"/>
        <end position="122"/>
    </location>
</feature>
<feature type="strand" evidence="7">
    <location>
        <begin position="124"/>
        <end position="126"/>
    </location>
</feature>
<feature type="helix" evidence="7">
    <location>
        <begin position="130"/>
        <end position="133"/>
    </location>
</feature>
<feature type="helix" evidence="7">
    <location>
        <begin position="136"/>
        <end position="138"/>
    </location>
</feature>
<feature type="helix" evidence="7">
    <location>
        <begin position="139"/>
        <end position="153"/>
    </location>
</feature>
<feature type="turn" evidence="7">
    <location>
        <begin position="154"/>
        <end position="157"/>
    </location>
</feature>
<feature type="strand" evidence="7">
    <location>
        <begin position="159"/>
        <end position="165"/>
    </location>
</feature>
<feature type="strand" evidence="7">
    <location>
        <begin position="172"/>
        <end position="174"/>
    </location>
</feature>
<feature type="helix" evidence="7">
    <location>
        <begin position="178"/>
        <end position="183"/>
    </location>
</feature>
<feature type="helix" evidence="7">
    <location>
        <begin position="187"/>
        <end position="198"/>
    </location>
</feature>
<feature type="strand" evidence="7">
    <location>
        <begin position="200"/>
        <end position="210"/>
    </location>
</feature>
<feature type="strand" evidence="7">
    <location>
        <begin position="212"/>
        <end position="215"/>
    </location>
</feature>
<feature type="helix" evidence="7">
    <location>
        <begin position="216"/>
        <end position="231"/>
    </location>
</feature>
<feature type="strand" evidence="7">
    <location>
        <begin position="237"/>
        <end position="240"/>
    </location>
</feature>
<feature type="strand" evidence="7">
    <location>
        <begin position="243"/>
        <end position="245"/>
    </location>
</feature>
<feature type="helix" evidence="7">
    <location>
        <begin position="253"/>
        <end position="262"/>
    </location>
</feature>
<feature type="strand" evidence="7">
    <location>
        <begin position="266"/>
        <end position="279"/>
    </location>
</feature>
<feature type="helix" evidence="7">
    <location>
        <begin position="282"/>
        <end position="301"/>
    </location>
</feature>
<feature type="strand" evidence="7">
    <location>
        <begin position="305"/>
        <end position="314"/>
    </location>
</feature>
<feature type="helix" evidence="7">
    <location>
        <begin position="315"/>
        <end position="317"/>
    </location>
</feature>
<feature type="helix" evidence="7">
    <location>
        <begin position="320"/>
        <end position="323"/>
    </location>
</feature>
<feature type="strand" evidence="7">
    <location>
        <begin position="331"/>
        <end position="333"/>
    </location>
</feature>
<feature type="helix" evidence="7">
    <location>
        <begin position="341"/>
        <end position="350"/>
    </location>
</feature>
<organism>
    <name type="scientific">Streptomyces sp</name>
    <dbReference type="NCBI Taxonomy" id="1931"/>
    <lineage>
        <taxon>Bacteria</taxon>
        <taxon>Bacillati</taxon>
        <taxon>Actinomycetota</taxon>
        <taxon>Actinomycetes</taxon>
        <taxon>Kitasatosporales</taxon>
        <taxon>Streptomycetaceae</taxon>
        <taxon>Streptomyces</taxon>
    </lineage>
</organism>
<sequence length="464" mass="49868">MFRHHPTRGRRTAGLLAAALATLSAGLTAVAPAHPARADTATLGELAEAKGRYFGSATDNPELPDTQYTQILGSEFSQITVGNTMKWQYTEPSRGRFDYTAAEEIVDLAESNGQSVRGHTLVWHNQLPSWVDDVPAGELLGVMRDHITHEVDHFKGRLIHWDVVNEAFEEDGSRRQSVFQQKIGDSYIAEAFKAARAADPDVKLYYNDYNIEGIGPKSDAVYEMVKSFKAQGIPIDGVGMQAHLIAGQVPASLQENIRRFADLGVDVALTELDIRMTLPRTAAKDAQQATDYGAVVEACLVVSRCVGITVWDYTDKYSWVPSVFPGQGAALPWDEDFAKKPAYHAIAAALNGGSPAPGGNCTATYRVTSQWQGGFTAEITVGNDHTAPITGWTVTWTLSSGQSISHMWNGNLTVNGQDVTVRDVGYNGTLGGNGSTTFGFQGEGVADTPADVTCTPGRPSGTSA</sequence>
<name>XYNA_STRSQ</name>
<comment type="function">
    <text evidence="5">Contributes to hydrolysis of hemicellulose, the major component of plant cell-walls. Hydrolyzes xylan to xylose and xylobiose.</text>
</comment>
<comment type="catalytic activity">
    <reaction>
        <text>Endohydrolysis of (1-&gt;4)-beta-D-xylosidic linkages in xylans.</text>
        <dbReference type="EC" id="3.2.1.8"/>
    </reaction>
</comment>
<comment type="cofactor">
    <text>Does not require any standard metal (Mg(2+), Mn2(+), Ca(2+)).</text>
</comment>
<comment type="activity regulation">
    <text evidence="5">Completely inhibited by Hg(2+), unaffected by EDTA.</text>
</comment>
<comment type="biophysicochemical properties">
    <kinetics>
        <Vmax evidence="5">772.2 umol/min/mg enzyme for oat spelt xylan</Vmax>
        <Vmax evidence="5">490.87 umol/min/mg enzyme for birchwood xylan</Vmax>
    </kinetics>
    <phDependence>
        <text evidence="5">Optimum pH is 6.5, more than 80% active between pH 5.0 and 7.0.</text>
    </phDependence>
    <temperatureDependence>
        <text evidence="5">Optimum temperature is 60 degrees Celsius, more than 80% of activity remains after 1 hour at 60 degrees Celsius.</text>
    </temperatureDependence>
</comment>
<comment type="pathway">
    <text>Glycan degradation; xylan degradation.</text>
</comment>
<comment type="similarity">
    <text evidence="6">Belongs to the glycosyl hydrolase 10 (cellulase F) family.</text>
</comment>
<dbReference type="EC" id="3.2.1.8"/>
<dbReference type="EMBL" id="EU153378">
    <property type="protein sequence ID" value="ABX71815.1"/>
    <property type="molecule type" value="Genomic_DNA"/>
</dbReference>
<dbReference type="PDB" id="3WUB">
    <property type="method" value="X-ray"/>
    <property type="resolution" value="2.08 A"/>
    <property type="chains" value="A=39-351"/>
</dbReference>
<dbReference type="PDB" id="3WUE">
    <property type="method" value="X-ray"/>
    <property type="resolution" value="2.15 A"/>
    <property type="chains" value="A=39-351"/>
</dbReference>
<dbReference type="PDB" id="3WUF">
    <property type="method" value="X-ray"/>
    <property type="resolution" value="2.04 A"/>
    <property type="chains" value="A=39-351"/>
</dbReference>
<dbReference type="PDB" id="3WUG">
    <property type="method" value="X-ray"/>
    <property type="resolution" value="1.88 A"/>
    <property type="chains" value="A=39-351"/>
</dbReference>
<dbReference type="PDBsum" id="3WUB"/>
<dbReference type="PDBsum" id="3WUE"/>
<dbReference type="PDBsum" id="3WUF"/>
<dbReference type="PDBsum" id="3WUG"/>
<dbReference type="SMR" id="B4XVN1"/>
<dbReference type="CAZy" id="CBM2">
    <property type="family name" value="Carbohydrate-Binding Module Family 2"/>
</dbReference>
<dbReference type="CAZy" id="GH10">
    <property type="family name" value="Glycoside Hydrolase Family 10"/>
</dbReference>
<dbReference type="BRENDA" id="3.2.1.8">
    <property type="organism ID" value="11186"/>
</dbReference>
<dbReference type="UniPathway" id="UPA00114"/>
<dbReference type="EvolutionaryTrace" id="B4XVN1"/>
<dbReference type="GO" id="GO:0031176">
    <property type="term" value="F:endo-1,4-beta-xylanase activity"/>
    <property type="evidence" value="ECO:0000314"/>
    <property type="project" value="UniProtKB"/>
</dbReference>
<dbReference type="GO" id="GO:0030247">
    <property type="term" value="F:polysaccharide binding"/>
    <property type="evidence" value="ECO:0007669"/>
    <property type="project" value="InterPro"/>
</dbReference>
<dbReference type="GO" id="GO:0045493">
    <property type="term" value="P:xylan catabolic process"/>
    <property type="evidence" value="ECO:0000314"/>
    <property type="project" value="UniProtKB"/>
</dbReference>
<dbReference type="FunFam" id="3.20.20.80:FF:000258">
    <property type="entry name" value="Endo-1,4-beta-xylanase A"/>
    <property type="match status" value="1"/>
</dbReference>
<dbReference type="Gene3D" id="2.60.40.290">
    <property type="match status" value="1"/>
</dbReference>
<dbReference type="Gene3D" id="3.20.20.80">
    <property type="entry name" value="Glycosidases"/>
    <property type="match status" value="1"/>
</dbReference>
<dbReference type="InterPro" id="IPR001919">
    <property type="entry name" value="CBD2"/>
</dbReference>
<dbReference type="InterPro" id="IPR008965">
    <property type="entry name" value="CBM2/CBM3_carb-bd_dom_sf"/>
</dbReference>
<dbReference type="InterPro" id="IPR012291">
    <property type="entry name" value="CBM2_carb-bd_dom_sf"/>
</dbReference>
<dbReference type="InterPro" id="IPR044846">
    <property type="entry name" value="GH10"/>
</dbReference>
<dbReference type="InterPro" id="IPR001000">
    <property type="entry name" value="GH10_dom"/>
</dbReference>
<dbReference type="InterPro" id="IPR017853">
    <property type="entry name" value="Glycoside_hydrolase_SF"/>
</dbReference>
<dbReference type="PANTHER" id="PTHR31490:SF88">
    <property type="entry name" value="BETA-XYLANASE"/>
    <property type="match status" value="1"/>
</dbReference>
<dbReference type="PANTHER" id="PTHR31490">
    <property type="entry name" value="GLYCOSYL HYDROLASE"/>
    <property type="match status" value="1"/>
</dbReference>
<dbReference type="Pfam" id="PF00553">
    <property type="entry name" value="CBM_2"/>
    <property type="match status" value="1"/>
</dbReference>
<dbReference type="Pfam" id="PF00331">
    <property type="entry name" value="Glyco_hydro_10"/>
    <property type="match status" value="1"/>
</dbReference>
<dbReference type="PRINTS" id="PR00134">
    <property type="entry name" value="GLHYDRLASE10"/>
</dbReference>
<dbReference type="SMART" id="SM00637">
    <property type="entry name" value="CBD_II"/>
    <property type="match status" value="1"/>
</dbReference>
<dbReference type="SMART" id="SM00633">
    <property type="entry name" value="Glyco_10"/>
    <property type="match status" value="1"/>
</dbReference>
<dbReference type="SUPFAM" id="SSF51445">
    <property type="entry name" value="(Trans)glycosidases"/>
    <property type="match status" value="1"/>
</dbReference>
<dbReference type="SUPFAM" id="SSF49384">
    <property type="entry name" value="Carbohydrate-binding domain"/>
    <property type="match status" value="1"/>
</dbReference>
<dbReference type="PROSITE" id="PS51173">
    <property type="entry name" value="CBM2"/>
    <property type="match status" value="1"/>
</dbReference>
<dbReference type="PROSITE" id="PS51760">
    <property type="entry name" value="GH10_2"/>
    <property type="match status" value="1"/>
</dbReference>
<keyword id="KW-0002">3D-structure</keyword>
<keyword id="KW-0119">Carbohydrate metabolism</keyword>
<keyword id="KW-0326">Glycosidase</keyword>
<keyword id="KW-0378">Hydrolase</keyword>
<keyword id="KW-0624">Polysaccharide degradation</keyword>
<keyword id="KW-0732">Signal</keyword>
<keyword id="KW-0858">Xylan degradation</keyword>
<gene>
    <name type="primary">xynAS9</name>
</gene>
<evidence type="ECO:0000250" key="1"/>
<evidence type="ECO:0000255" key="2"/>
<evidence type="ECO:0000255" key="3">
    <source>
        <dbReference type="PROSITE-ProRule" id="PRU01096"/>
    </source>
</evidence>
<evidence type="ECO:0000255" key="4">
    <source>
        <dbReference type="PROSITE-ProRule" id="PRU01135"/>
    </source>
</evidence>
<evidence type="ECO:0000269" key="5">
    <source>
    </source>
</evidence>
<evidence type="ECO:0000305" key="6"/>
<evidence type="ECO:0007829" key="7">
    <source>
        <dbReference type="PDB" id="3WUG"/>
    </source>
</evidence>
<protein>
    <recommendedName>
        <fullName>Endo-1,4-beta-xylanase A</fullName>
        <shortName>Xylanase A</shortName>
        <ecNumber>3.2.1.8</ecNumber>
    </recommendedName>
</protein>
<reference key="1">
    <citation type="journal article" date="2008" name="Appl. Microbiol. Biotechnol.">
        <title>Cloning, expression, and characterization of a new xylanase with broad temperature adaptability from Streptomyces sp. S9.</title>
        <authorList>
            <person name="Li N."/>
            <person name="Meng K."/>
            <person name="Wang Y."/>
            <person name="Shi P."/>
            <person name="Luo H."/>
            <person name="Bai Y."/>
            <person name="Yang P."/>
            <person name="Yao B."/>
        </authorList>
    </citation>
    <scope>NUCLEOTIDE SEQUENCE [GENOMIC DNA]</scope>
    <scope>FUNCTION AS A XYLANASE</scope>
    <scope>LACK OF COFACTOR</scope>
    <scope>ACTIVITY REGULATION</scope>
    <scope>BIOPHYSICOCHEMICAL PROPERTIES</scope>
    <source>
        <strain>S9</strain>
    </source>
</reference>